<protein>
    <recommendedName>
        <fullName evidence="2">Small ribosomal subunit protein uS12</fullName>
    </recommendedName>
    <alternativeName>
        <fullName evidence="3">30S ribosomal protein S12</fullName>
    </alternativeName>
</protein>
<name>RS12_BEII9</name>
<accession>B2IK57</accession>
<organism>
    <name type="scientific">Beijerinckia indica subsp. indica (strain ATCC 9039 / DSM 1715 / NCIMB 8712)</name>
    <dbReference type="NCBI Taxonomy" id="395963"/>
    <lineage>
        <taxon>Bacteria</taxon>
        <taxon>Pseudomonadati</taxon>
        <taxon>Pseudomonadota</taxon>
        <taxon>Alphaproteobacteria</taxon>
        <taxon>Hyphomicrobiales</taxon>
        <taxon>Beijerinckiaceae</taxon>
        <taxon>Beijerinckia</taxon>
    </lineage>
</organism>
<gene>
    <name evidence="2" type="primary">rpsL</name>
    <name type="ordered locus">Bind_1349</name>
</gene>
<dbReference type="EMBL" id="CP001016">
    <property type="protein sequence ID" value="ACB94989.1"/>
    <property type="molecule type" value="Genomic_DNA"/>
</dbReference>
<dbReference type="RefSeq" id="WP_012384346.1">
    <property type="nucleotide sequence ID" value="NC_010581.1"/>
</dbReference>
<dbReference type="SMR" id="B2IK57"/>
<dbReference type="STRING" id="395963.Bind_1349"/>
<dbReference type="KEGG" id="bid:Bind_1349"/>
<dbReference type="eggNOG" id="COG0048">
    <property type="taxonomic scope" value="Bacteria"/>
</dbReference>
<dbReference type="HOGENOM" id="CLU_104295_1_2_5"/>
<dbReference type="OrthoDB" id="9802366at2"/>
<dbReference type="Proteomes" id="UP000001695">
    <property type="component" value="Chromosome"/>
</dbReference>
<dbReference type="GO" id="GO:0015935">
    <property type="term" value="C:small ribosomal subunit"/>
    <property type="evidence" value="ECO:0007669"/>
    <property type="project" value="InterPro"/>
</dbReference>
<dbReference type="GO" id="GO:0019843">
    <property type="term" value="F:rRNA binding"/>
    <property type="evidence" value="ECO:0007669"/>
    <property type="project" value="UniProtKB-UniRule"/>
</dbReference>
<dbReference type="GO" id="GO:0003735">
    <property type="term" value="F:structural constituent of ribosome"/>
    <property type="evidence" value="ECO:0007669"/>
    <property type="project" value="InterPro"/>
</dbReference>
<dbReference type="GO" id="GO:0000049">
    <property type="term" value="F:tRNA binding"/>
    <property type="evidence" value="ECO:0007669"/>
    <property type="project" value="UniProtKB-UniRule"/>
</dbReference>
<dbReference type="GO" id="GO:0006412">
    <property type="term" value="P:translation"/>
    <property type="evidence" value="ECO:0007669"/>
    <property type="project" value="UniProtKB-UniRule"/>
</dbReference>
<dbReference type="CDD" id="cd03368">
    <property type="entry name" value="Ribosomal_S12"/>
    <property type="match status" value="1"/>
</dbReference>
<dbReference type="FunFam" id="2.40.50.140:FF:000001">
    <property type="entry name" value="30S ribosomal protein S12"/>
    <property type="match status" value="1"/>
</dbReference>
<dbReference type="Gene3D" id="2.40.50.140">
    <property type="entry name" value="Nucleic acid-binding proteins"/>
    <property type="match status" value="1"/>
</dbReference>
<dbReference type="HAMAP" id="MF_00403_B">
    <property type="entry name" value="Ribosomal_uS12_B"/>
    <property type="match status" value="1"/>
</dbReference>
<dbReference type="InterPro" id="IPR012340">
    <property type="entry name" value="NA-bd_OB-fold"/>
</dbReference>
<dbReference type="InterPro" id="IPR006032">
    <property type="entry name" value="Ribosomal_uS12"/>
</dbReference>
<dbReference type="InterPro" id="IPR005679">
    <property type="entry name" value="Ribosomal_uS12_bac"/>
</dbReference>
<dbReference type="NCBIfam" id="TIGR00981">
    <property type="entry name" value="rpsL_bact"/>
    <property type="match status" value="1"/>
</dbReference>
<dbReference type="PANTHER" id="PTHR11652">
    <property type="entry name" value="30S RIBOSOMAL PROTEIN S12 FAMILY MEMBER"/>
    <property type="match status" value="1"/>
</dbReference>
<dbReference type="Pfam" id="PF00164">
    <property type="entry name" value="Ribosom_S12_S23"/>
    <property type="match status" value="1"/>
</dbReference>
<dbReference type="PIRSF" id="PIRSF002133">
    <property type="entry name" value="Ribosomal_S12/S23"/>
    <property type="match status" value="1"/>
</dbReference>
<dbReference type="PRINTS" id="PR01034">
    <property type="entry name" value="RIBOSOMALS12"/>
</dbReference>
<dbReference type="SUPFAM" id="SSF50249">
    <property type="entry name" value="Nucleic acid-binding proteins"/>
    <property type="match status" value="1"/>
</dbReference>
<dbReference type="PROSITE" id="PS00055">
    <property type="entry name" value="RIBOSOMAL_S12"/>
    <property type="match status" value="1"/>
</dbReference>
<proteinExistence type="inferred from homology"/>
<evidence type="ECO:0000250" key="1"/>
<evidence type="ECO:0000255" key="2">
    <source>
        <dbReference type="HAMAP-Rule" id="MF_00403"/>
    </source>
</evidence>
<evidence type="ECO:0000305" key="3"/>
<comment type="function">
    <text evidence="2">With S4 and S5 plays an important role in translational accuracy.</text>
</comment>
<comment type="function">
    <text evidence="2">Interacts with and stabilizes bases of the 16S rRNA that are involved in tRNA selection in the A site and with the mRNA backbone. Located at the interface of the 30S and 50S subunits, it traverses the body of the 30S subunit contacting proteins on the other side and probably holding the rRNA structure together. The combined cluster of proteins S8, S12 and S17 appears to hold together the shoulder and platform of the 30S subunit.</text>
</comment>
<comment type="subunit">
    <text evidence="2">Part of the 30S ribosomal subunit. Contacts proteins S8 and S17. May interact with IF1 in the 30S initiation complex.</text>
</comment>
<comment type="similarity">
    <text evidence="2">Belongs to the universal ribosomal protein uS12 family.</text>
</comment>
<reference key="1">
    <citation type="journal article" date="2010" name="J. Bacteriol.">
        <title>Complete genome sequence of Beijerinckia indica subsp. indica.</title>
        <authorList>
            <person name="Tamas I."/>
            <person name="Dedysh S.N."/>
            <person name="Liesack W."/>
            <person name="Stott M.B."/>
            <person name="Alam M."/>
            <person name="Murrell J.C."/>
            <person name="Dunfield P.F."/>
        </authorList>
    </citation>
    <scope>NUCLEOTIDE SEQUENCE [LARGE SCALE GENOMIC DNA]</scope>
    <source>
        <strain>ATCC 9039 / DSM 1715 / NCIMB 8712</strain>
    </source>
</reference>
<feature type="chain" id="PRO_1000194128" description="Small ribosomal subunit protein uS12">
    <location>
        <begin position="1"/>
        <end position="123"/>
    </location>
</feature>
<feature type="modified residue" description="3-methylthioaspartic acid" evidence="1">
    <location>
        <position position="89"/>
    </location>
</feature>
<sequence length="123" mass="14093">MPTISQLIRKPRHEKAYREKARHLEACPQKRGVCTRVYTTTPKKPNSALRKVAKVRLTNGFEVIGYIPGEGHNLQEHSVVMIRGGRVKDLPGVRYHILRGVLDTQGVKNRKQRRSKYGAKRPK</sequence>
<keyword id="KW-0488">Methylation</keyword>
<keyword id="KW-1185">Reference proteome</keyword>
<keyword id="KW-0687">Ribonucleoprotein</keyword>
<keyword id="KW-0689">Ribosomal protein</keyword>
<keyword id="KW-0694">RNA-binding</keyword>
<keyword id="KW-0699">rRNA-binding</keyword>
<keyword id="KW-0820">tRNA-binding</keyword>